<keyword id="KW-0002">3D-structure</keyword>
<keyword id="KW-0007">Acetylation</keyword>
<keyword id="KW-0963">Cytoplasm</keyword>
<keyword id="KW-0539">Nucleus</keyword>
<keyword id="KW-1185">Reference proteome</keyword>
<keyword id="KW-0687">Ribonucleoprotein</keyword>
<keyword id="KW-0689">Ribosomal protein</keyword>
<keyword id="KW-0690">Ribosome biogenesis</keyword>
<keyword id="KW-0698">rRNA processing</keyword>
<proteinExistence type="evidence at protein level"/>
<protein>
    <recommendedName>
        <fullName evidence="7">Small ribosomal subunit protein uS11A</fullName>
    </recommendedName>
    <alternativeName>
        <fullName evidence="8">40S ribosomal protein S14-A</fullName>
    </alternativeName>
    <alternativeName>
        <fullName>RP59A</fullName>
    </alternativeName>
</protein>
<name>RS14A_YEAST</name>
<reference key="1">
    <citation type="journal article" date="1987" name="Mol. Cell. Biol.">
        <title>Structure and expression of the Saccharomyces cerevisiae CRY1 gene: a highly conserved ribosomal protein gene.</title>
        <authorList>
            <person name="Larkin J.C."/>
            <person name="Thompson J.R."/>
            <person name="Woolford J.L. Jr."/>
        </authorList>
    </citation>
    <scope>NUCLEOTIDE SEQUENCE [GENOMIC DNA]</scope>
</reference>
<reference key="2">
    <citation type="journal article" date="1992" name="Nature">
        <title>The complete DNA sequence of yeast chromosome III.</title>
        <authorList>
            <person name="Oliver S.G."/>
            <person name="van der Aart Q.J.M."/>
            <person name="Agostoni-Carbone M.L."/>
            <person name="Aigle M."/>
            <person name="Alberghina L."/>
            <person name="Alexandraki D."/>
            <person name="Antoine G."/>
            <person name="Anwar R."/>
            <person name="Ballesta J.P.G."/>
            <person name="Benit P."/>
            <person name="Berben G."/>
            <person name="Bergantino E."/>
            <person name="Biteau N."/>
            <person name="Bolle P.-A."/>
            <person name="Bolotin-Fukuhara M."/>
            <person name="Brown A."/>
            <person name="Brown A.J.P."/>
            <person name="Buhler J.-M."/>
            <person name="Carcano C."/>
            <person name="Carignani G."/>
            <person name="Cederberg H."/>
            <person name="Chanet R."/>
            <person name="Contreras R."/>
            <person name="Crouzet M."/>
            <person name="Daignan-Fornier B."/>
            <person name="Defoor E."/>
            <person name="Delgado M.D."/>
            <person name="Demolder J."/>
            <person name="Doira C."/>
            <person name="Dubois E."/>
            <person name="Dujon B."/>
            <person name="Duesterhoeft A."/>
            <person name="Erdmann D."/>
            <person name="Esteban M."/>
            <person name="Fabre F."/>
            <person name="Fairhead C."/>
            <person name="Faye G."/>
            <person name="Feldmann H."/>
            <person name="Fiers W."/>
            <person name="Francingues-Gaillard M.-C."/>
            <person name="Franco L."/>
            <person name="Frontali L."/>
            <person name="Fukuhara H."/>
            <person name="Fuller L.J."/>
            <person name="Galland P."/>
            <person name="Gent M.E."/>
            <person name="Gigot D."/>
            <person name="Gilliquet V."/>
            <person name="Glansdorff N."/>
            <person name="Goffeau A."/>
            <person name="Grenson M."/>
            <person name="Grisanti P."/>
            <person name="Grivell L.A."/>
            <person name="de Haan M."/>
            <person name="Haasemann M."/>
            <person name="Hatat D."/>
            <person name="Hoenicka J."/>
            <person name="Hegemann J.H."/>
            <person name="Herbert C.J."/>
            <person name="Hilger F."/>
            <person name="Hohmann S."/>
            <person name="Hollenberg C.P."/>
            <person name="Huse K."/>
            <person name="Iborra F."/>
            <person name="Indge K.J."/>
            <person name="Isono K."/>
            <person name="Jacq C."/>
            <person name="Jacquet M."/>
            <person name="James C.M."/>
            <person name="Jauniaux J.-C."/>
            <person name="Jia Y."/>
            <person name="Jimenez A."/>
            <person name="Kelly A."/>
            <person name="Kleinhans U."/>
            <person name="Kreisl P."/>
            <person name="Lanfranchi G."/>
            <person name="Lewis C."/>
            <person name="van der Linden C.G."/>
            <person name="Lucchini G."/>
            <person name="Lutzenkirchen K."/>
            <person name="Maat M.J."/>
            <person name="Mallet L."/>
            <person name="Mannhaupt G."/>
            <person name="Martegani E."/>
            <person name="Mathieu A."/>
            <person name="Maurer C.T.C."/>
            <person name="McConnell D."/>
            <person name="McKee R.A."/>
            <person name="Messenguy F."/>
            <person name="Mewes H.-W."/>
            <person name="Molemans F."/>
            <person name="Montague M.A."/>
            <person name="Muzi Falconi M."/>
            <person name="Navas L."/>
            <person name="Newlon C.S."/>
            <person name="Noone D."/>
            <person name="Pallier C."/>
            <person name="Panzeri L."/>
            <person name="Pearson B.M."/>
            <person name="Perea J."/>
            <person name="Philippsen P."/>
            <person name="Pierard A."/>
            <person name="Planta R.J."/>
            <person name="Plevani P."/>
            <person name="Poetsch B."/>
            <person name="Pohl F.M."/>
            <person name="Purnelle B."/>
            <person name="Ramezani Rad M."/>
            <person name="Rasmussen S.W."/>
            <person name="Raynal A."/>
            <person name="Remacha M.A."/>
            <person name="Richterich P."/>
            <person name="Roberts A.B."/>
            <person name="Rodriguez F."/>
            <person name="Sanz E."/>
            <person name="Schaaff-Gerstenschlaeger I."/>
            <person name="Scherens B."/>
            <person name="Schweitzer B."/>
            <person name="Shu Y."/>
            <person name="Skala J."/>
            <person name="Slonimski P.P."/>
            <person name="Sor F."/>
            <person name="Soustelle C."/>
            <person name="Spiegelberg R."/>
            <person name="Stateva L.I."/>
            <person name="Steensma H.Y."/>
            <person name="Steiner S."/>
            <person name="Thierry A."/>
            <person name="Thireos G."/>
            <person name="Tzermia M."/>
            <person name="Urrestarazu L.A."/>
            <person name="Valle G."/>
            <person name="Vetter I."/>
            <person name="van Vliet-Reedijk J.C."/>
            <person name="Voet M."/>
            <person name="Volckaert G."/>
            <person name="Vreken P."/>
            <person name="Wang H."/>
            <person name="Warmington J.R."/>
            <person name="von Wettstein D."/>
            <person name="Wicksteed B.L."/>
            <person name="Wilson C."/>
            <person name="Wurst H."/>
            <person name="Xu G."/>
            <person name="Yoshikawa A."/>
            <person name="Zimmermann F.K."/>
            <person name="Sgouros J.G."/>
        </authorList>
    </citation>
    <scope>NUCLEOTIDE SEQUENCE [LARGE SCALE GENOMIC DNA]</scope>
    <source>
        <strain>ATCC 204508 / S288c</strain>
    </source>
</reference>
<reference key="3">
    <citation type="submission" date="2001-06" db="EMBL/GenBank/DDBJ databases">
        <authorList>
            <person name="Valles G."/>
            <person name="Volckaerts G."/>
        </authorList>
    </citation>
    <scope>SEQUENCE REVISION TO 72 AND 123</scope>
</reference>
<reference key="4">
    <citation type="journal article" date="2014" name="G3 (Bethesda)">
        <title>The reference genome sequence of Saccharomyces cerevisiae: Then and now.</title>
        <authorList>
            <person name="Engel S.R."/>
            <person name="Dietrich F.S."/>
            <person name="Fisk D.G."/>
            <person name="Binkley G."/>
            <person name="Balakrishnan R."/>
            <person name="Costanzo M.C."/>
            <person name="Dwight S.S."/>
            <person name="Hitz B.C."/>
            <person name="Karra K."/>
            <person name="Nash R.S."/>
            <person name="Weng S."/>
            <person name="Wong E.D."/>
            <person name="Lloyd P."/>
            <person name="Skrzypek M.S."/>
            <person name="Miyasato S.R."/>
            <person name="Simison M."/>
            <person name="Cherry J.M."/>
        </authorList>
    </citation>
    <scope>GENOME REANNOTATION</scope>
    <source>
        <strain>ATCC 204508 / S288c</strain>
    </source>
</reference>
<reference key="5">
    <citation type="journal article" date="1992" name="J. Biol. Chem.">
        <title>NH2-terminal acetylation of ribosomal proteins of Saccharomyces cerevisiae.</title>
        <authorList>
            <person name="Takakura H."/>
            <person name="Tsunasawa S."/>
            <person name="Miyagi M."/>
            <person name="Warner J.R."/>
        </authorList>
    </citation>
    <scope>ACETYLATION AT SER-2 BY NATA</scope>
</reference>
<reference key="6">
    <citation type="journal article" date="1998" name="Yeast">
        <title>The list of cytoplasmic ribosomal proteins of Saccharomyces cerevisiae.</title>
        <authorList>
            <person name="Planta R.J."/>
            <person name="Mager W.H."/>
        </authorList>
    </citation>
    <scope>NOMENCLATURE</scope>
    <scope>SUBUNIT</scope>
</reference>
<reference key="7">
    <citation type="journal article" date="1999" name="J. Biol. Chem.">
        <title>The action of N-terminal acetyltransferases on yeast ribosomal proteins.</title>
        <authorList>
            <person name="Arnold R.J."/>
            <person name="Polevoda B."/>
            <person name="Reilly J.P."/>
            <person name="Sherman F."/>
        </authorList>
    </citation>
    <scope>CLEAVAGE OF INITIATOR METHIONINE</scope>
    <scope>ACETYLATION AT SER-2 BY NATA</scope>
</reference>
<reference key="8">
    <citation type="journal article" date="2003" name="Nature">
        <title>Global analysis of protein expression in yeast.</title>
        <authorList>
            <person name="Ghaemmaghami S."/>
            <person name="Huh W.-K."/>
            <person name="Bower K."/>
            <person name="Howson R.W."/>
            <person name="Belle A."/>
            <person name="Dephoure N."/>
            <person name="O'Shea E.K."/>
            <person name="Weissman J.S."/>
        </authorList>
    </citation>
    <scope>LEVEL OF PROTEIN EXPRESSION [LARGE SCALE ANALYSIS]</scope>
</reference>
<reference key="9">
    <citation type="journal article" date="2004" name="Eukaryot. Cell">
        <title>The small-subunit processome is a ribosome assembly intermediate.</title>
        <authorList>
            <person name="Bernstein K.A."/>
            <person name="Gallagher J.E.G."/>
            <person name="Mitchell B.M."/>
            <person name="Granneman S."/>
            <person name="Baserga S.J."/>
        </authorList>
    </citation>
    <scope>FUNCTION</scope>
    <scope>INTERACTION WITH MPP10 AND SNORNA U3</scope>
    <scope>IDENTIFICATION IN SSU PROCESSOME</scope>
    <scope>SUBCELLULAR LOCATION</scope>
</reference>
<reference key="10">
    <citation type="journal article" date="2012" name="Proc. Natl. Acad. Sci. U.S.A.">
        <title>N-terminal acetylome analyses and functional insights of the N-terminal acetyltransferase NatB.</title>
        <authorList>
            <person name="Van Damme P."/>
            <person name="Lasa M."/>
            <person name="Polevoda B."/>
            <person name="Gazquez C."/>
            <person name="Elosegui-Artola A."/>
            <person name="Kim D.S."/>
            <person name="De Juan-Pardo E."/>
            <person name="Demeyer K."/>
            <person name="Hole K."/>
            <person name="Larrea E."/>
            <person name="Timmerman E."/>
            <person name="Prieto J."/>
            <person name="Arnesen T."/>
            <person name="Sherman F."/>
            <person name="Gevaert K."/>
            <person name="Aldabe R."/>
        </authorList>
    </citation>
    <scope>ACETYLATION [LARGE SCALE ANALYSIS] AT SER-2</scope>
    <scope>CLEAVAGE OF INITIATOR METHIONINE [LARGE SCALE ANALYSIS]</scope>
    <scope>IDENTIFICATION BY MASS SPECTROMETRY [LARGE SCALE ANALYSIS]</scope>
</reference>
<reference key="11">
    <citation type="journal article" date="2014" name="Curr. Opin. Struct. Biol.">
        <title>A new system for naming ribosomal proteins.</title>
        <authorList>
            <person name="Ban N."/>
            <person name="Beckmann R."/>
            <person name="Cate J.H.D."/>
            <person name="Dinman J.D."/>
            <person name="Dragon F."/>
            <person name="Ellis S.R."/>
            <person name="Lafontaine D.L.J."/>
            <person name="Lindahl L."/>
            <person name="Liljas A."/>
            <person name="Lipton J.M."/>
            <person name="McAlear M.A."/>
            <person name="Moore P.B."/>
            <person name="Noller H.F."/>
            <person name="Ortega J."/>
            <person name="Panse V.G."/>
            <person name="Ramakrishnan V."/>
            <person name="Spahn C.M.T."/>
            <person name="Steitz T.A."/>
            <person name="Tchorzewski M."/>
            <person name="Tollervey D."/>
            <person name="Warren A.J."/>
            <person name="Williamson J.R."/>
            <person name="Wilson D."/>
            <person name="Yonath A."/>
            <person name="Yusupov M."/>
        </authorList>
    </citation>
    <scope>NOMENCLATURE</scope>
</reference>
<reference key="12">
    <citation type="journal article" date="2001" name="Cell">
        <title>Structure of the 80S ribosome from Saccharomyces cerevisiae -- tRNA-ribosome and subunit-subunit interactions.</title>
        <authorList>
            <person name="Spahn C.M.T."/>
            <person name="Beckmann R."/>
            <person name="Eswar N."/>
            <person name="Penczek P.A."/>
            <person name="Sali A."/>
            <person name="Blobel G."/>
            <person name="Frank J."/>
        </authorList>
    </citation>
    <scope>3D-STRUCTURE MODELING OF 9-133</scope>
    <scope>ELECTRON MICROSCOPY</scope>
</reference>
<reference key="13">
    <citation type="journal article" date="2004" name="EMBO J.">
        <title>Domain movements of elongation factor eEF2 and the eukaryotic 80S ribosome facilitate tRNA translocation.</title>
        <authorList>
            <person name="Spahn C.M.T."/>
            <person name="Gomez-Lorenzo M.G."/>
            <person name="Grassucci R.A."/>
            <person name="Joergensen R."/>
            <person name="Andersen G.R."/>
            <person name="Beckmann R."/>
            <person name="Penczek P.A."/>
            <person name="Ballesta J.P.G."/>
            <person name="Frank J."/>
        </authorList>
    </citation>
    <scope>3D-STRUCTURE MODELING</scope>
    <scope>ELECTRON MICROSCOPY</scope>
</reference>
<reference key="14">
    <citation type="journal article" date="2010" name="Science">
        <title>Crystal structure of the eukaryotic ribosome.</title>
        <authorList>
            <person name="Ben-Shem A."/>
            <person name="Jenner L."/>
            <person name="Yusupova G."/>
            <person name="Yusupov M."/>
        </authorList>
    </citation>
    <scope>X-RAY CRYSTALLOGRAPHY (4.00 ANGSTROMS) OF 80S RIBOSOME</scope>
</reference>
<reference key="15">
    <citation type="journal article" date="2011" name="Science">
        <title>The structure of the eukaryotic ribosome at 3.0 A resolution.</title>
        <authorList>
            <person name="Ben-Shem A."/>
            <person name="Garreau de Loubresse N."/>
            <person name="Melnikov S."/>
            <person name="Jenner L."/>
            <person name="Yusupova G."/>
            <person name="Yusupov M."/>
        </authorList>
    </citation>
    <scope>X-RAY CRYSTALLOGRAPHY (3.00 ANGSTROMS) OF 80S RIBOSOME</scope>
    <scope>SUBUNIT</scope>
    <scope>SUBCELLULAR LOCATION</scope>
</reference>
<dbReference type="EMBL" id="M16126">
    <property type="protein sequence ID" value="AAA34530.1"/>
    <property type="molecule type" value="Genomic_DNA"/>
</dbReference>
<dbReference type="EMBL" id="X59720">
    <property type="protein sequence ID" value="CAC42981.1"/>
    <property type="molecule type" value="Genomic_DNA"/>
</dbReference>
<dbReference type="EMBL" id="BK006937">
    <property type="protein sequence ID" value="DAA07510.1"/>
    <property type="molecule type" value="Genomic_DNA"/>
</dbReference>
<dbReference type="PIR" id="A02726">
    <property type="entry name" value="R5BY59"/>
</dbReference>
<dbReference type="RefSeq" id="NP_009960.2">
    <property type="nucleotide sequence ID" value="NM_001178745.1"/>
</dbReference>
<dbReference type="PDB" id="3J6X">
    <property type="method" value="EM"/>
    <property type="resolution" value="6.10 A"/>
    <property type="chains" value="14=1-137"/>
</dbReference>
<dbReference type="PDB" id="3J6Y">
    <property type="method" value="EM"/>
    <property type="resolution" value="6.10 A"/>
    <property type="chains" value="14=1-137"/>
</dbReference>
<dbReference type="PDB" id="3J77">
    <property type="method" value="EM"/>
    <property type="resolution" value="6.20 A"/>
    <property type="chains" value="14=1-137"/>
</dbReference>
<dbReference type="PDB" id="3J78">
    <property type="method" value="EM"/>
    <property type="resolution" value="6.30 A"/>
    <property type="chains" value="14=1-137"/>
</dbReference>
<dbReference type="PDB" id="4U3M">
    <property type="method" value="X-ray"/>
    <property type="resolution" value="3.00 A"/>
    <property type="chains" value="C4/c4=2-137"/>
</dbReference>
<dbReference type="PDB" id="4U3N">
    <property type="method" value="X-ray"/>
    <property type="resolution" value="3.20 A"/>
    <property type="chains" value="C4/c4=2-137"/>
</dbReference>
<dbReference type="PDB" id="4U3U">
    <property type="method" value="X-ray"/>
    <property type="resolution" value="2.90 A"/>
    <property type="chains" value="C4/c4=2-137"/>
</dbReference>
<dbReference type="PDB" id="4U4N">
    <property type="method" value="X-ray"/>
    <property type="resolution" value="3.10 A"/>
    <property type="chains" value="C4/c4=2-137"/>
</dbReference>
<dbReference type="PDB" id="4U4O">
    <property type="method" value="X-ray"/>
    <property type="resolution" value="3.60 A"/>
    <property type="chains" value="C4/c4=2-137"/>
</dbReference>
<dbReference type="PDB" id="4U4Q">
    <property type="method" value="X-ray"/>
    <property type="resolution" value="3.00 A"/>
    <property type="chains" value="C4/c4=2-137"/>
</dbReference>
<dbReference type="PDB" id="4U4R">
    <property type="method" value="X-ray"/>
    <property type="resolution" value="2.80 A"/>
    <property type="chains" value="C4/c4=2-137"/>
</dbReference>
<dbReference type="PDB" id="4U4U">
    <property type="method" value="X-ray"/>
    <property type="resolution" value="3.00 A"/>
    <property type="chains" value="C4/c4=2-137"/>
</dbReference>
<dbReference type="PDB" id="4U4Y">
    <property type="method" value="X-ray"/>
    <property type="resolution" value="3.20 A"/>
    <property type="chains" value="C4/c4=2-137"/>
</dbReference>
<dbReference type="PDB" id="4U4Z">
    <property type="method" value="X-ray"/>
    <property type="resolution" value="3.10 A"/>
    <property type="chains" value="C4/c4=2-137"/>
</dbReference>
<dbReference type="PDB" id="4U50">
    <property type="method" value="X-ray"/>
    <property type="resolution" value="3.20 A"/>
    <property type="chains" value="C4/c4=2-137"/>
</dbReference>
<dbReference type="PDB" id="4U51">
    <property type="method" value="X-ray"/>
    <property type="resolution" value="3.20 A"/>
    <property type="chains" value="C4/c4=2-137"/>
</dbReference>
<dbReference type="PDB" id="4U52">
    <property type="method" value="X-ray"/>
    <property type="resolution" value="3.00 A"/>
    <property type="chains" value="C4/c4=2-137"/>
</dbReference>
<dbReference type="PDB" id="4U53">
    <property type="method" value="X-ray"/>
    <property type="resolution" value="3.30 A"/>
    <property type="chains" value="C4/c4=2-137"/>
</dbReference>
<dbReference type="PDB" id="4U55">
    <property type="method" value="X-ray"/>
    <property type="resolution" value="3.20 A"/>
    <property type="chains" value="C4/c4=2-137"/>
</dbReference>
<dbReference type="PDB" id="4U56">
    <property type="method" value="X-ray"/>
    <property type="resolution" value="3.45 A"/>
    <property type="chains" value="C4/c4=2-137"/>
</dbReference>
<dbReference type="PDB" id="4U6F">
    <property type="method" value="X-ray"/>
    <property type="resolution" value="3.10 A"/>
    <property type="chains" value="C4/c4=2-137"/>
</dbReference>
<dbReference type="PDB" id="4V4B">
    <property type="method" value="EM"/>
    <property type="resolution" value="11.70 A"/>
    <property type="chains" value="AK=2-137"/>
</dbReference>
<dbReference type="PDB" id="4V5Z">
    <property type="method" value="EM"/>
    <property type="resolution" value="8.70 A"/>
    <property type="chains" value="Ak=6-137"/>
</dbReference>
<dbReference type="PDB" id="4V6I">
    <property type="method" value="EM"/>
    <property type="resolution" value="8.80 A"/>
    <property type="chains" value="AK=1-137"/>
</dbReference>
<dbReference type="PDB" id="4V7R">
    <property type="method" value="X-ray"/>
    <property type="resolution" value="4.00 A"/>
    <property type="chains" value="AH/CH=1-137"/>
</dbReference>
<dbReference type="PDB" id="4V88">
    <property type="method" value="X-ray"/>
    <property type="resolution" value="3.00 A"/>
    <property type="chains" value="AO/CO=1-137"/>
</dbReference>
<dbReference type="PDB" id="4V8Y">
    <property type="method" value="EM"/>
    <property type="resolution" value="4.30 A"/>
    <property type="chains" value="AO=1-137"/>
</dbReference>
<dbReference type="PDB" id="4V8Z">
    <property type="method" value="EM"/>
    <property type="resolution" value="6.60 A"/>
    <property type="chains" value="AO=1-137"/>
</dbReference>
<dbReference type="PDB" id="4V92">
    <property type="method" value="EM"/>
    <property type="resolution" value="3.70 A"/>
    <property type="chains" value="O=11-137"/>
</dbReference>
<dbReference type="PDB" id="5DAT">
    <property type="method" value="X-ray"/>
    <property type="resolution" value="3.15 A"/>
    <property type="chains" value="C4/c4=2-137"/>
</dbReference>
<dbReference type="PDB" id="5DC3">
    <property type="method" value="X-ray"/>
    <property type="resolution" value="3.25 A"/>
    <property type="chains" value="C4/c4=2-137"/>
</dbReference>
<dbReference type="PDB" id="5DGE">
    <property type="method" value="X-ray"/>
    <property type="resolution" value="3.45 A"/>
    <property type="chains" value="C4/c4=2-137"/>
</dbReference>
<dbReference type="PDB" id="5DGF">
    <property type="method" value="X-ray"/>
    <property type="resolution" value="3.30 A"/>
    <property type="chains" value="C4/c4=2-137"/>
</dbReference>
<dbReference type="PDB" id="5DGV">
    <property type="method" value="X-ray"/>
    <property type="resolution" value="3.10 A"/>
    <property type="chains" value="C4/c4=2-137"/>
</dbReference>
<dbReference type="PDB" id="5FCI">
    <property type="method" value="X-ray"/>
    <property type="resolution" value="3.40 A"/>
    <property type="chains" value="C4/c4=2-137"/>
</dbReference>
<dbReference type="PDB" id="5FCJ">
    <property type="method" value="X-ray"/>
    <property type="resolution" value="3.10 A"/>
    <property type="chains" value="C4/c4=2-137"/>
</dbReference>
<dbReference type="PDB" id="5JPQ">
    <property type="method" value="EM"/>
    <property type="resolution" value="7.30 A"/>
    <property type="chains" value="w=1-137"/>
</dbReference>
<dbReference type="PDB" id="5JUO">
    <property type="method" value="EM"/>
    <property type="resolution" value="4.00 A"/>
    <property type="chains" value="LB=1-137"/>
</dbReference>
<dbReference type="PDB" id="5JUP">
    <property type="method" value="EM"/>
    <property type="resolution" value="3.50 A"/>
    <property type="chains" value="LB=1-137"/>
</dbReference>
<dbReference type="PDB" id="5JUS">
    <property type="method" value="EM"/>
    <property type="resolution" value="4.20 A"/>
    <property type="chains" value="LB=1-137"/>
</dbReference>
<dbReference type="PDB" id="5JUT">
    <property type="method" value="EM"/>
    <property type="resolution" value="4.00 A"/>
    <property type="chains" value="LB=1-137"/>
</dbReference>
<dbReference type="PDB" id="5JUU">
    <property type="method" value="EM"/>
    <property type="resolution" value="4.00 A"/>
    <property type="chains" value="LB=1-137"/>
</dbReference>
<dbReference type="PDB" id="5LL6">
    <property type="method" value="EM"/>
    <property type="resolution" value="3.90 A"/>
    <property type="chains" value="Z=1-137"/>
</dbReference>
<dbReference type="PDB" id="5LYB">
    <property type="method" value="X-ray"/>
    <property type="resolution" value="3.25 A"/>
    <property type="chains" value="C4/c4=10-137"/>
</dbReference>
<dbReference type="PDB" id="5M1J">
    <property type="method" value="EM"/>
    <property type="resolution" value="3.30 A"/>
    <property type="chains" value="O2=11-137"/>
</dbReference>
<dbReference type="PDB" id="5MC6">
    <property type="method" value="EM"/>
    <property type="resolution" value="3.80 A"/>
    <property type="chains" value="Z=1-137"/>
</dbReference>
<dbReference type="PDB" id="5NDG">
    <property type="method" value="X-ray"/>
    <property type="resolution" value="3.70 A"/>
    <property type="chains" value="C4/c4=10-137"/>
</dbReference>
<dbReference type="PDB" id="5TGM">
    <property type="method" value="X-ray"/>
    <property type="resolution" value="3.50 A"/>
    <property type="chains" value="C4/c4=10-126"/>
</dbReference>
<dbReference type="PDB" id="5WLC">
    <property type="method" value="EM"/>
    <property type="resolution" value="3.80 A"/>
    <property type="chains" value="NG=1-137"/>
</dbReference>
<dbReference type="PDB" id="5WYJ">
    <property type="method" value="EM"/>
    <property type="resolution" value="8.70 A"/>
    <property type="chains" value="SP=1-137"/>
</dbReference>
<dbReference type="PDB" id="5WYK">
    <property type="method" value="EM"/>
    <property type="resolution" value="4.50 A"/>
    <property type="chains" value="SP=1-137"/>
</dbReference>
<dbReference type="PDB" id="6EML">
    <property type="method" value="EM"/>
    <property type="resolution" value="3.60 A"/>
    <property type="chains" value="Z=1-137"/>
</dbReference>
<dbReference type="PDB" id="6FAI">
    <property type="method" value="EM"/>
    <property type="resolution" value="3.40 A"/>
    <property type="chains" value="O=1-137"/>
</dbReference>
<dbReference type="PDB" id="6KE6">
    <property type="method" value="EM"/>
    <property type="resolution" value="3.40 A"/>
    <property type="chains" value="SP=1-137"/>
</dbReference>
<dbReference type="PDB" id="6LQP">
    <property type="method" value="EM"/>
    <property type="resolution" value="3.20 A"/>
    <property type="chains" value="SP=1-137"/>
</dbReference>
<dbReference type="PDB" id="6LQQ">
    <property type="method" value="EM"/>
    <property type="resolution" value="4.10 A"/>
    <property type="chains" value="SP=1-137"/>
</dbReference>
<dbReference type="PDB" id="6LQR">
    <property type="method" value="EM"/>
    <property type="resolution" value="8.60 A"/>
    <property type="chains" value="SP=1-137"/>
</dbReference>
<dbReference type="PDB" id="6LQS">
    <property type="method" value="EM"/>
    <property type="resolution" value="3.80 A"/>
    <property type="chains" value="SP=1-137"/>
</dbReference>
<dbReference type="PDB" id="6LQT">
    <property type="method" value="EM"/>
    <property type="resolution" value="4.90 A"/>
    <property type="chains" value="SP=1-137"/>
</dbReference>
<dbReference type="PDB" id="6LQU">
    <property type="method" value="EM"/>
    <property type="resolution" value="3.70 A"/>
    <property type="chains" value="SP=1-137"/>
</dbReference>
<dbReference type="PDB" id="6RBD">
    <property type="method" value="EM"/>
    <property type="resolution" value="3.47 A"/>
    <property type="chains" value="O=1-137"/>
</dbReference>
<dbReference type="PDB" id="6RBE">
    <property type="method" value="EM"/>
    <property type="resolution" value="3.80 A"/>
    <property type="chains" value="O=1-137"/>
</dbReference>
<dbReference type="PDB" id="6S47">
    <property type="method" value="EM"/>
    <property type="resolution" value="3.28 A"/>
    <property type="chains" value="BP=2-137"/>
</dbReference>
<dbReference type="PDB" id="6SNT">
    <property type="method" value="EM"/>
    <property type="resolution" value="2.80 A"/>
    <property type="chains" value="O=1-137"/>
</dbReference>
<dbReference type="PDB" id="6SV4">
    <property type="method" value="EM"/>
    <property type="resolution" value="3.30 A"/>
    <property type="chains" value="Z/Zb/Zc=1-137"/>
</dbReference>
<dbReference type="PDB" id="6T7I">
    <property type="method" value="EM"/>
    <property type="resolution" value="3.20 A"/>
    <property type="chains" value="SO=1-137"/>
</dbReference>
<dbReference type="PDB" id="6T7T">
    <property type="method" value="EM"/>
    <property type="resolution" value="3.10 A"/>
    <property type="chains" value="SO=1-137"/>
</dbReference>
<dbReference type="PDB" id="6T83">
    <property type="method" value="EM"/>
    <property type="resolution" value="4.00 A"/>
    <property type="chains" value="Ob/p=1-137"/>
</dbReference>
<dbReference type="PDB" id="6Y7C">
    <property type="method" value="EM"/>
    <property type="resolution" value="3.80 A"/>
    <property type="chains" value="O=1-137"/>
</dbReference>
<dbReference type="PDB" id="6Z6J">
    <property type="method" value="EM"/>
    <property type="resolution" value="3.40 A"/>
    <property type="chains" value="SO=1-137"/>
</dbReference>
<dbReference type="PDB" id="6Z6K">
    <property type="method" value="EM"/>
    <property type="resolution" value="3.40 A"/>
    <property type="chains" value="SO=1-137"/>
</dbReference>
<dbReference type="PDB" id="6ZCE">
    <property type="method" value="EM"/>
    <property type="resolution" value="5.30 A"/>
    <property type="chains" value="P=2-137"/>
</dbReference>
<dbReference type="PDB" id="6ZQA">
    <property type="method" value="EM"/>
    <property type="resolution" value="4.40 A"/>
    <property type="chains" value="DO=1-137"/>
</dbReference>
<dbReference type="PDB" id="6ZQB">
    <property type="method" value="EM"/>
    <property type="resolution" value="3.90 A"/>
    <property type="chains" value="DO=1-137"/>
</dbReference>
<dbReference type="PDB" id="6ZQC">
    <property type="method" value="EM"/>
    <property type="resolution" value="3.80 A"/>
    <property type="chains" value="DO=1-137"/>
</dbReference>
<dbReference type="PDB" id="6ZQD">
    <property type="method" value="EM"/>
    <property type="resolution" value="3.80 A"/>
    <property type="chains" value="DO=1-137"/>
</dbReference>
<dbReference type="PDB" id="6ZQE">
    <property type="method" value="EM"/>
    <property type="resolution" value="7.10 A"/>
    <property type="chains" value="DO=1-137"/>
</dbReference>
<dbReference type="PDB" id="6ZQF">
    <property type="method" value="EM"/>
    <property type="resolution" value="4.90 A"/>
    <property type="chains" value="DO=1-137"/>
</dbReference>
<dbReference type="PDB" id="6ZQG">
    <property type="method" value="EM"/>
    <property type="resolution" value="3.50 A"/>
    <property type="chains" value="DO=1-137"/>
</dbReference>
<dbReference type="PDB" id="6ZU9">
    <property type="method" value="EM"/>
    <property type="resolution" value="6.20 A"/>
    <property type="chains" value="Z=2-137"/>
</dbReference>
<dbReference type="PDB" id="7AJT">
    <property type="method" value="EM"/>
    <property type="resolution" value="4.60 A"/>
    <property type="chains" value="DO=1-137"/>
</dbReference>
<dbReference type="PDB" id="7AJU">
    <property type="method" value="EM"/>
    <property type="resolution" value="3.80 A"/>
    <property type="chains" value="DO=1-137"/>
</dbReference>
<dbReference type="PDB" id="7D4I">
    <property type="method" value="EM"/>
    <property type="resolution" value="4.00 A"/>
    <property type="chains" value="SP=1-137"/>
</dbReference>
<dbReference type="PDB" id="7D5S">
    <property type="method" value="EM"/>
    <property type="resolution" value="4.60 A"/>
    <property type="chains" value="SP=1-137"/>
</dbReference>
<dbReference type="PDB" id="7D5T">
    <property type="method" value="EM"/>
    <property type="resolution" value="6.00 A"/>
    <property type="chains" value="SP=1-137"/>
</dbReference>
<dbReference type="PDB" id="7D63">
    <property type="method" value="EM"/>
    <property type="resolution" value="12.30 A"/>
    <property type="chains" value="SP=1-137"/>
</dbReference>
<dbReference type="PDB" id="7MPI">
    <property type="method" value="EM"/>
    <property type="resolution" value="3.05 A"/>
    <property type="chains" value="BO=11-137"/>
</dbReference>
<dbReference type="PDB" id="7MPJ">
    <property type="method" value="EM"/>
    <property type="resolution" value="2.70 A"/>
    <property type="chains" value="BO=11-137"/>
</dbReference>
<dbReference type="PDB" id="7N8B">
    <property type="method" value="EM"/>
    <property type="resolution" value="3.05 A"/>
    <property type="chains" value="BO=11-137"/>
</dbReference>
<dbReference type="PDB" id="7WTL">
    <property type="method" value="EM"/>
    <property type="resolution" value="3.30 A"/>
    <property type="chains" value="SO=1-137"/>
</dbReference>
<dbReference type="PDB" id="7WTM">
    <property type="method" value="EM"/>
    <property type="resolution" value="3.50 A"/>
    <property type="chains" value="SO=1-137"/>
</dbReference>
<dbReference type="PDB" id="7WTN">
    <property type="method" value="EM"/>
    <property type="resolution" value="3.40 A"/>
    <property type="chains" value="SO=1-137"/>
</dbReference>
<dbReference type="PDB" id="7WTO">
    <property type="method" value="EM"/>
    <property type="resolution" value="3.50 A"/>
    <property type="chains" value="SO=1-137"/>
</dbReference>
<dbReference type="PDB" id="7WTP">
    <property type="method" value="EM"/>
    <property type="resolution" value="3.80 A"/>
    <property type="chains" value="SO=1-137"/>
</dbReference>
<dbReference type="PDB" id="7WTQ">
    <property type="method" value="EM"/>
    <property type="resolution" value="3.70 A"/>
    <property type="chains" value="SO=1-137"/>
</dbReference>
<dbReference type="PDB" id="7WTR">
    <property type="method" value="EM"/>
    <property type="resolution" value="3.50 A"/>
    <property type="chains" value="SO=1-137"/>
</dbReference>
<dbReference type="PDB" id="7ZW0">
    <property type="method" value="EM"/>
    <property type="resolution" value="2.40 A"/>
    <property type="chains" value="sZ=1-137"/>
</dbReference>
<dbReference type="PDB" id="8C00">
    <property type="method" value="EM"/>
    <property type="resolution" value="2.90 A"/>
    <property type="chains" value="Z=1-137"/>
</dbReference>
<dbReference type="PDB" id="8C01">
    <property type="method" value="EM"/>
    <property type="resolution" value="2.70 A"/>
    <property type="chains" value="Z=1-137"/>
</dbReference>
<dbReference type="PDB" id="8CAH">
    <property type="method" value="EM"/>
    <property type="resolution" value="3.00 A"/>
    <property type="chains" value="Z=1-137"/>
</dbReference>
<dbReference type="PDB" id="8CAS">
    <property type="method" value="EM"/>
    <property type="resolution" value="3.30 A"/>
    <property type="chains" value="Z=1-137"/>
</dbReference>
<dbReference type="PDB" id="8CBJ">
    <property type="method" value="EM"/>
    <property type="resolution" value="3.80 A"/>
    <property type="chains" value="O=1-137"/>
</dbReference>
<dbReference type="PDB" id="8CCS">
    <property type="method" value="EM"/>
    <property type="resolution" value="1.97 A"/>
    <property type="chains" value="q=1-137"/>
</dbReference>
<dbReference type="PDB" id="8CDL">
    <property type="method" value="EM"/>
    <property type="resolution" value="2.72 A"/>
    <property type="chains" value="q=1-137"/>
</dbReference>
<dbReference type="PDB" id="8CDR">
    <property type="method" value="EM"/>
    <property type="resolution" value="2.04 A"/>
    <property type="chains" value="q=1-137"/>
</dbReference>
<dbReference type="PDB" id="8CEH">
    <property type="method" value="EM"/>
    <property type="resolution" value="2.05 A"/>
    <property type="chains" value="q=1-137"/>
</dbReference>
<dbReference type="PDB" id="8CF5">
    <property type="method" value="EM"/>
    <property type="resolution" value="2.71 A"/>
    <property type="chains" value="q=1-137"/>
</dbReference>
<dbReference type="PDB" id="8CG8">
    <property type="method" value="EM"/>
    <property type="resolution" value="2.57 A"/>
    <property type="chains" value="q=1-137"/>
</dbReference>
<dbReference type="PDB" id="8CGN">
    <property type="method" value="EM"/>
    <property type="resolution" value="2.28 A"/>
    <property type="chains" value="q=1-137"/>
</dbReference>
<dbReference type="PDB" id="8CIV">
    <property type="method" value="EM"/>
    <property type="resolution" value="2.47 A"/>
    <property type="chains" value="q=1-137"/>
</dbReference>
<dbReference type="PDB" id="8CKU">
    <property type="method" value="EM"/>
    <property type="resolution" value="3.11 A"/>
    <property type="chains" value="q=1-137"/>
</dbReference>
<dbReference type="PDB" id="8CMJ">
    <property type="method" value="EM"/>
    <property type="resolution" value="3.79 A"/>
    <property type="chains" value="q=1-137"/>
</dbReference>
<dbReference type="PDB" id="8EUB">
    <property type="method" value="EM"/>
    <property type="resolution" value="2.52 A"/>
    <property type="chains" value="BO=1-137"/>
</dbReference>
<dbReference type="PDB" id="8EVP">
    <property type="method" value="EM"/>
    <property type="resolution" value="2.38 A"/>
    <property type="chains" value="BO=1-137"/>
</dbReference>
<dbReference type="PDB" id="8EVQ">
    <property type="method" value="EM"/>
    <property type="resolution" value="2.72 A"/>
    <property type="chains" value="BO=1-137"/>
</dbReference>
<dbReference type="PDB" id="8EVR">
    <property type="method" value="EM"/>
    <property type="resolution" value="2.87 A"/>
    <property type="chains" value="BO=1-137"/>
</dbReference>
<dbReference type="PDB" id="8EVS">
    <property type="method" value="EM"/>
    <property type="resolution" value="2.62 A"/>
    <property type="chains" value="BO=1-137"/>
</dbReference>
<dbReference type="PDB" id="8EVT">
    <property type="method" value="EM"/>
    <property type="resolution" value="2.20 A"/>
    <property type="chains" value="BO=1-137"/>
</dbReference>
<dbReference type="PDB" id="8EWB">
    <property type="method" value="EM"/>
    <property type="resolution" value="2.87 A"/>
    <property type="chains" value="BO=1-137"/>
</dbReference>
<dbReference type="PDB" id="8EWC">
    <property type="method" value="EM"/>
    <property type="resolution" value="2.45 A"/>
    <property type="chains" value="BO=1-137"/>
</dbReference>
<dbReference type="PDB" id="8K2D">
    <property type="method" value="EM"/>
    <property type="resolution" value="3.20 A"/>
    <property type="chains" value="SO=1-137"/>
</dbReference>
<dbReference type="PDB" id="8K82">
    <property type="method" value="EM"/>
    <property type="resolution" value="3.00 A"/>
    <property type="chains" value="SO=1-137"/>
</dbReference>
<dbReference type="PDB" id="8P9A">
    <property type="method" value="X-ray"/>
    <property type="resolution" value="2.90 A"/>
    <property type="chains" value="P/c4=2-137"/>
</dbReference>
<dbReference type="PDB" id="8T2X">
    <property type="method" value="EM"/>
    <property type="resolution" value="2.46 A"/>
    <property type="chains" value="BO=1-137"/>
</dbReference>
<dbReference type="PDB" id="8T2Y">
    <property type="method" value="EM"/>
    <property type="resolution" value="2.20 A"/>
    <property type="chains" value="BO=1-137"/>
</dbReference>
<dbReference type="PDB" id="8T2Z">
    <property type="method" value="EM"/>
    <property type="resolution" value="2.40 A"/>
    <property type="chains" value="BO=1-137"/>
</dbReference>
<dbReference type="PDB" id="8T30">
    <property type="method" value="EM"/>
    <property type="resolution" value="2.88 A"/>
    <property type="chains" value="BO=1-137"/>
</dbReference>
<dbReference type="PDB" id="8T3A">
    <property type="method" value="EM"/>
    <property type="resolution" value="2.86 A"/>
    <property type="chains" value="BO=1-137"/>
</dbReference>
<dbReference type="PDB" id="8T3B">
    <property type="method" value="EM"/>
    <property type="resolution" value="3.08 A"/>
    <property type="chains" value="BO=1-137"/>
</dbReference>
<dbReference type="PDB" id="8T3C">
    <property type="method" value="EM"/>
    <property type="resolution" value="3.86 A"/>
    <property type="chains" value="BO=1-137"/>
</dbReference>
<dbReference type="PDB" id="8T3D">
    <property type="method" value="EM"/>
    <property type="resolution" value="2.95 A"/>
    <property type="chains" value="BO=1-137"/>
</dbReference>
<dbReference type="PDB" id="8T3E">
    <property type="method" value="EM"/>
    <property type="resolution" value="3.04 A"/>
    <property type="chains" value="BO=1-137"/>
</dbReference>
<dbReference type="PDB" id="8T3F">
    <property type="method" value="EM"/>
    <property type="resolution" value="3.09 A"/>
    <property type="chains" value="BO=1-137"/>
</dbReference>
<dbReference type="PDB" id="8UT0">
    <property type="method" value="EM"/>
    <property type="resolution" value="3.22 A"/>
    <property type="chains" value="SZ=11-137"/>
</dbReference>
<dbReference type="PDB" id="8UTI">
    <property type="method" value="EM"/>
    <property type="resolution" value="3.13 A"/>
    <property type="chains" value="SZ=11-137"/>
</dbReference>
<dbReference type="PDB" id="9F9S">
    <property type="method" value="EM"/>
    <property type="resolution" value="2.90 A"/>
    <property type="chains" value="So=1-137"/>
</dbReference>
<dbReference type="PDBsum" id="3J6X"/>
<dbReference type="PDBsum" id="3J6Y"/>
<dbReference type="PDBsum" id="3J77"/>
<dbReference type="PDBsum" id="3J78"/>
<dbReference type="PDBsum" id="4U3M"/>
<dbReference type="PDBsum" id="4U3N"/>
<dbReference type="PDBsum" id="4U3U"/>
<dbReference type="PDBsum" id="4U4N"/>
<dbReference type="PDBsum" id="4U4O"/>
<dbReference type="PDBsum" id="4U4Q"/>
<dbReference type="PDBsum" id="4U4R"/>
<dbReference type="PDBsum" id="4U4U"/>
<dbReference type="PDBsum" id="4U4Y"/>
<dbReference type="PDBsum" id="4U4Z"/>
<dbReference type="PDBsum" id="4U50"/>
<dbReference type="PDBsum" id="4U51"/>
<dbReference type="PDBsum" id="4U52"/>
<dbReference type="PDBsum" id="4U53"/>
<dbReference type="PDBsum" id="4U55"/>
<dbReference type="PDBsum" id="4U56"/>
<dbReference type="PDBsum" id="4U6F"/>
<dbReference type="PDBsum" id="4V4B"/>
<dbReference type="PDBsum" id="4V5Z"/>
<dbReference type="PDBsum" id="4V6I"/>
<dbReference type="PDBsum" id="4V7R"/>
<dbReference type="PDBsum" id="4V88"/>
<dbReference type="PDBsum" id="4V8Y"/>
<dbReference type="PDBsum" id="4V8Z"/>
<dbReference type="PDBsum" id="4V92"/>
<dbReference type="PDBsum" id="5DAT"/>
<dbReference type="PDBsum" id="5DC3"/>
<dbReference type="PDBsum" id="5DGE"/>
<dbReference type="PDBsum" id="5DGF"/>
<dbReference type="PDBsum" id="5DGV"/>
<dbReference type="PDBsum" id="5FCI"/>
<dbReference type="PDBsum" id="5FCJ"/>
<dbReference type="PDBsum" id="5JPQ"/>
<dbReference type="PDBsum" id="5JUO"/>
<dbReference type="PDBsum" id="5JUP"/>
<dbReference type="PDBsum" id="5JUS"/>
<dbReference type="PDBsum" id="5JUT"/>
<dbReference type="PDBsum" id="5JUU"/>
<dbReference type="PDBsum" id="5LL6"/>
<dbReference type="PDBsum" id="5LYB"/>
<dbReference type="PDBsum" id="5M1J"/>
<dbReference type="PDBsum" id="5MC6"/>
<dbReference type="PDBsum" id="5NDG"/>
<dbReference type="PDBsum" id="5TGM"/>
<dbReference type="PDBsum" id="5WLC"/>
<dbReference type="PDBsum" id="5WYJ"/>
<dbReference type="PDBsum" id="5WYK"/>
<dbReference type="PDBsum" id="6EML"/>
<dbReference type="PDBsum" id="6FAI"/>
<dbReference type="PDBsum" id="6KE6"/>
<dbReference type="PDBsum" id="6LQP"/>
<dbReference type="PDBsum" id="6LQQ"/>
<dbReference type="PDBsum" id="6LQR"/>
<dbReference type="PDBsum" id="6LQS"/>
<dbReference type="PDBsum" id="6LQT"/>
<dbReference type="PDBsum" id="6LQU"/>
<dbReference type="PDBsum" id="6RBD"/>
<dbReference type="PDBsum" id="6RBE"/>
<dbReference type="PDBsum" id="6S47"/>
<dbReference type="PDBsum" id="6SNT"/>
<dbReference type="PDBsum" id="6SV4"/>
<dbReference type="PDBsum" id="6T7I"/>
<dbReference type="PDBsum" id="6T7T"/>
<dbReference type="PDBsum" id="6T83"/>
<dbReference type="PDBsum" id="6Y7C"/>
<dbReference type="PDBsum" id="6Z6J"/>
<dbReference type="PDBsum" id="6Z6K"/>
<dbReference type="PDBsum" id="6ZCE"/>
<dbReference type="PDBsum" id="6ZQA"/>
<dbReference type="PDBsum" id="6ZQB"/>
<dbReference type="PDBsum" id="6ZQC"/>
<dbReference type="PDBsum" id="6ZQD"/>
<dbReference type="PDBsum" id="6ZQE"/>
<dbReference type="PDBsum" id="6ZQF"/>
<dbReference type="PDBsum" id="6ZQG"/>
<dbReference type="PDBsum" id="6ZU9"/>
<dbReference type="PDBsum" id="7AJT"/>
<dbReference type="PDBsum" id="7AJU"/>
<dbReference type="PDBsum" id="7D4I"/>
<dbReference type="PDBsum" id="7D5S"/>
<dbReference type="PDBsum" id="7D5T"/>
<dbReference type="PDBsum" id="7D63"/>
<dbReference type="PDBsum" id="7MPI"/>
<dbReference type="PDBsum" id="7MPJ"/>
<dbReference type="PDBsum" id="7N8B"/>
<dbReference type="PDBsum" id="7WTL"/>
<dbReference type="PDBsum" id="7WTM"/>
<dbReference type="PDBsum" id="7WTN"/>
<dbReference type="PDBsum" id="7WTO"/>
<dbReference type="PDBsum" id="7WTP"/>
<dbReference type="PDBsum" id="7WTQ"/>
<dbReference type="PDBsum" id="7WTR"/>
<dbReference type="PDBsum" id="7ZW0"/>
<dbReference type="PDBsum" id="8C00"/>
<dbReference type="PDBsum" id="8C01"/>
<dbReference type="PDBsum" id="8CAH"/>
<dbReference type="PDBsum" id="8CAS"/>
<dbReference type="PDBsum" id="8CBJ"/>
<dbReference type="PDBsum" id="8CCS"/>
<dbReference type="PDBsum" id="8CDL"/>
<dbReference type="PDBsum" id="8CDR"/>
<dbReference type="PDBsum" id="8CEH"/>
<dbReference type="PDBsum" id="8CF5"/>
<dbReference type="PDBsum" id="8CG8"/>
<dbReference type="PDBsum" id="8CGN"/>
<dbReference type="PDBsum" id="8CIV"/>
<dbReference type="PDBsum" id="8CKU"/>
<dbReference type="PDBsum" id="8CMJ"/>
<dbReference type="PDBsum" id="8EUB"/>
<dbReference type="PDBsum" id="8EVP"/>
<dbReference type="PDBsum" id="8EVQ"/>
<dbReference type="PDBsum" id="8EVR"/>
<dbReference type="PDBsum" id="8EVS"/>
<dbReference type="PDBsum" id="8EVT"/>
<dbReference type="PDBsum" id="8EWB"/>
<dbReference type="PDBsum" id="8EWC"/>
<dbReference type="PDBsum" id="8K2D"/>
<dbReference type="PDBsum" id="8K82"/>
<dbReference type="PDBsum" id="8P9A"/>
<dbReference type="PDBsum" id="8T2X"/>
<dbReference type="PDBsum" id="8T2Y"/>
<dbReference type="PDBsum" id="8T2Z"/>
<dbReference type="PDBsum" id="8T30"/>
<dbReference type="PDBsum" id="8T3A"/>
<dbReference type="PDBsum" id="8T3B"/>
<dbReference type="PDBsum" id="8T3C"/>
<dbReference type="PDBsum" id="8T3D"/>
<dbReference type="PDBsum" id="8T3E"/>
<dbReference type="PDBsum" id="8T3F"/>
<dbReference type="PDBsum" id="8UT0"/>
<dbReference type="PDBsum" id="8UTI"/>
<dbReference type="PDBsum" id="9F9S"/>
<dbReference type="EMDB" id="EMD-0949"/>
<dbReference type="EMDB" id="EMD-0950"/>
<dbReference type="EMDB" id="EMD-0951"/>
<dbReference type="EMDB" id="EMD-0952"/>
<dbReference type="EMDB" id="EMD-0953"/>
<dbReference type="EMDB" id="EMD-0954"/>
<dbReference type="EMDB" id="EMD-10098"/>
<dbReference type="EMDB" id="EMD-10262"/>
<dbReference type="EMDB" id="EMD-10315"/>
<dbReference type="EMDB" id="EMD-10396"/>
<dbReference type="EMDB" id="EMD-10398"/>
<dbReference type="EMDB" id="EMD-10713"/>
<dbReference type="EMDB" id="EMD-11096"/>
<dbReference type="EMDB" id="EMD-11097"/>
<dbReference type="EMDB" id="EMD-11160"/>
<dbReference type="EMDB" id="EMD-11357"/>
<dbReference type="EMDB" id="EMD-11358"/>
<dbReference type="EMDB" id="EMD-11359"/>
<dbReference type="EMDB" id="EMD-11360"/>
<dbReference type="EMDB" id="EMD-11361"/>
<dbReference type="EMDB" id="EMD-11362"/>
<dbReference type="EMDB" id="EMD-11363"/>
<dbReference type="EMDB" id="EMD-11439"/>
<dbReference type="EMDB" id="EMD-11807"/>
<dbReference type="EMDB" id="EMD-11808"/>
<dbReference type="EMDB" id="EMD-14990"/>
<dbReference type="EMDB" id="EMD-16347"/>
<dbReference type="EMDB" id="EMD-16349"/>
<dbReference type="EMDB" id="EMD-16525"/>
<dbReference type="EMDB" id="EMD-16533"/>
<dbReference type="EMDB" id="EMD-16541"/>
<dbReference type="EMDB" id="EMD-16563"/>
<dbReference type="EMDB" id="EMD-16591"/>
<dbReference type="EMDB" id="EMD-16594"/>
<dbReference type="EMDB" id="EMD-16609"/>
<dbReference type="EMDB" id="EMD-16616"/>
<dbReference type="EMDB" id="EMD-16634"/>
<dbReference type="EMDB" id="EMD-16648"/>
<dbReference type="EMDB" id="EMD-16684"/>
<dbReference type="EMDB" id="EMD-16702"/>
<dbReference type="EMDB" id="EMD-16729"/>
<dbReference type="EMDB" id="EMD-23934"/>
<dbReference type="EMDB" id="EMD-23935"/>
<dbReference type="EMDB" id="EMD-24235"/>
<dbReference type="EMDB" id="EMD-28610"/>
<dbReference type="EMDB" id="EMD-28632"/>
<dbReference type="EMDB" id="EMD-28633"/>
<dbReference type="EMDB" id="EMD-28634"/>
<dbReference type="EMDB" id="EMD-28635"/>
<dbReference type="EMDB" id="EMD-28636"/>
<dbReference type="EMDB" id="EMD-28642"/>
<dbReference type="EMDB" id="EMD-28643"/>
<dbReference type="EMDB" id="EMD-30574"/>
<dbReference type="EMDB" id="EMD-30584"/>
<dbReference type="EMDB" id="EMD-30585"/>
<dbReference type="EMDB" id="EMD-30588"/>
<dbReference type="EMDB" id="EMD-32790"/>
<dbReference type="EMDB" id="EMD-32791"/>
<dbReference type="EMDB" id="EMD-32792"/>
<dbReference type="EMDB" id="EMD-32793"/>
<dbReference type="EMDB" id="EMD-32794"/>
<dbReference type="EMDB" id="EMD-32795"/>
<dbReference type="EMDB" id="EMD-32796"/>
<dbReference type="EMDB" id="EMD-3461"/>
<dbReference type="EMDB" id="EMD-36839"/>
<dbReference type="EMDB" id="EMD-36945"/>
<dbReference type="EMDB" id="EMD-40990"/>
<dbReference type="EMDB" id="EMD-40991"/>
<dbReference type="EMDB" id="EMD-40992"/>
<dbReference type="EMDB" id="EMD-40993"/>
<dbReference type="EMDB" id="EMD-40997"/>
<dbReference type="EMDB" id="EMD-40998"/>
<dbReference type="EMDB" id="EMD-40999"/>
<dbReference type="EMDB" id="EMD-41000"/>
<dbReference type="EMDB" id="EMD-41001"/>
<dbReference type="EMDB" id="EMD-41002"/>
<dbReference type="EMDB" id="EMD-4140"/>
<dbReference type="EMDB" id="EMD-4214"/>
<dbReference type="EMDB" id="EMD-42525"/>
<dbReference type="EMDB" id="EMD-42540"/>
<dbReference type="EMDB" id="EMD-4792"/>
<dbReference type="EMDB" id="EMD-4793"/>
<dbReference type="EMDB" id="EMD-50259"/>
<dbReference type="EMDB" id="EMD-6695"/>
<dbReference type="EMDB" id="EMD-6696"/>
<dbReference type="EMDB" id="EMD-8859"/>
<dbReference type="EMDB" id="EMD-9964"/>
<dbReference type="SMR" id="P06367"/>
<dbReference type="BioGRID" id="31014">
    <property type="interactions" value="801"/>
</dbReference>
<dbReference type="ComplexPortal" id="CPX-1599">
    <property type="entry name" value="40S cytosolic small ribosomal subunit"/>
</dbReference>
<dbReference type="FunCoup" id="P06367">
    <property type="interactions" value="1248"/>
</dbReference>
<dbReference type="IntAct" id="P06367">
    <property type="interactions" value="95"/>
</dbReference>
<dbReference type="STRING" id="4932.YCR031C"/>
<dbReference type="MoonProt" id="P06367"/>
<dbReference type="iPTMnet" id="P06367"/>
<dbReference type="PaxDb" id="4932-YCR031C"/>
<dbReference type="PeptideAtlas" id="P06367"/>
<dbReference type="TopDownProteomics" id="P06367"/>
<dbReference type="EnsemblFungi" id="YCR031C_mRNA">
    <property type="protein sequence ID" value="YCR031C"/>
    <property type="gene ID" value="YCR031C"/>
</dbReference>
<dbReference type="GeneID" id="850397"/>
<dbReference type="KEGG" id="sce:YCR031C"/>
<dbReference type="AGR" id="SGD:S000000627"/>
<dbReference type="SGD" id="S000000627">
    <property type="gene designation" value="RPS14A"/>
</dbReference>
<dbReference type="VEuPathDB" id="FungiDB:YCR031C"/>
<dbReference type="eggNOG" id="KOG0407">
    <property type="taxonomic scope" value="Eukaryota"/>
</dbReference>
<dbReference type="GeneTree" id="ENSGT00390000000703"/>
<dbReference type="HOGENOM" id="CLU_072439_6_0_1"/>
<dbReference type="InParanoid" id="P06367"/>
<dbReference type="OMA" id="IYASHND"/>
<dbReference type="OrthoDB" id="1677536at2759"/>
<dbReference type="BioCyc" id="YEAST:G3O-29345-MONOMER"/>
<dbReference type="BioGRID-ORCS" id="850397">
    <property type="hits" value="10 hits in 10 CRISPR screens"/>
</dbReference>
<dbReference type="PRO" id="PR:P06367"/>
<dbReference type="Proteomes" id="UP000002311">
    <property type="component" value="Chromosome III"/>
</dbReference>
<dbReference type="RNAct" id="P06367">
    <property type="molecule type" value="protein"/>
</dbReference>
<dbReference type="GO" id="GO:0030686">
    <property type="term" value="C:90S preribosome"/>
    <property type="evidence" value="ECO:0007005"/>
    <property type="project" value="SGD"/>
</dbReference>
<dbReference type="GO" id="GO:0005829">
    <property type="term" value="C:cytosol"/>
    <property type="evidence" value="ECO:0000304"/>
    <property type="project" value="Reactome"/>
</dbReference>
<dbReference type="GO" id="GO:0022627">
    <property type="term" value="C:cytosolic small ribosomal subunit"/>
    <property type="evidence" value="ECO:0000318"/>
    <property type="project" value="GO_Central"/>
</dbReference>
<dbReference type="GO" id="GO:0005730">
    <property type="term" value="C:nucleolus"/>
    <property type="evidence" value="ECO:0007669"/>
    <property type="project" value="UniProtKB-SubCell"/>
</dbReference>
<dbReference type="GO" id="GO:0005654">
    <property type="term" value="C:nucleoplasm"/>
    <property type="evidence" value="ECO:0000304"/>
    <property type="project" value="Reactome"/>
</dbReference>
<dbReference type="GO" id="GO:0032040">
    <property type="term" value="C:small-subunit processome"/>
    <property type="evidence" value="ECO:0000314"/>
    <property type="project" value="SGD"/>
</dbReference>
<dbReference type="GO" id="GO:0003729">
    <property type="term" value="F:mRNA binding"/>
    <property type="evidence" value="ECO:0000314"/>
    <property type="project" value="SGD"/>
</dbReference>
<dbReference type="GO" id="GO:0003735">
    <property type="term" value="F:structural constituent of ribosome"/>
    <property type="evidence" value="ECO:0000318"/>
    <property type="project" value="GO_Central"/>
</dbReference>
<dbReference type="GO" id="GO:0002181">
    <property type="term" value="P:cytoplasmic translation"/>
    <property type="evidence" value="ECO:0000303"/>
    <property type="project" value="SGD"/>
</dbReference>
<dbReference type="GO" id="GO:0000462">
    <property type="term" value="P:maturation of SSU-rRNA from tricistronic rRNA transcript (SSU-rRNA, 5.8S rRNA, LSU-rRNA)"/>
    <property type="evidence" value="ECO:0000315"/>
    <property type="project" value="SGD"/>
</dbReference>
<dbReference type="GO" id="GO:0000028">
    <property type="term" value="P:ribosomal small subunit assembly"/>
    <property type="evidence" value="ECO:0000315"/>
    <property type="project" value="SGD"/>
</dbReference>
<dbReference type="GO" id="GO:0006412">
    <property type="term" value="P:translation"/>
    <property type="evidence" value="ECO:0000318"/>
    <property type="project" value="GO_Central"/>
</dbReference>
<dbReference type="FunFam" id="3.30.420.80:FF:000002">
    <property type="entry name" value="40S ribosomal protein S14"/>
    <property type="match status" value="1"/>
</dbReference>
<dbReference type="Gene3D" id="3.30.420.80">
    <property type="entry name" value="Ribosomal protein S11"/>
    <property type="match status" value="1"/>
</dbReference>
<dbReference type="HAMAP" id="MF_01310">
    <property type="entry name" value="Ribosomal_uS11"/>
    <property type="match status" value="1"/>
</dbReference>
<dbReference type="InterPro" id="IPR001971">
    <property type="entry name" value="Ribosomal_uS11"/>
</dbReference>
<dbReference type="InterPro" id="IPR018102">
    <property type="entry name" value="Ribosomal_uS11_CS"/>
</dbReference>
<dbReference type="InterPro" id="IPR036967">
    <property type="entry name" value="Ribosomal_uS11_sf"/>
</dbReference>
<dbReference type="NCBIfam" id="NF007176">
    <property type="entry name" value="PRK09607.1"/>
    <property type="match status" value="1"/>
</dbReference>
<dbReference type="PANTHER" id="PTHR11759">
    <property type="entry name" value="40S RIBOSOMAL PROTEIN S14/30S RIBOSOMAL PROTEIN S11"/>
    <property type="match status" value="1"/>
</dbReference>
<dbReference type="Pfam" id="PF00411">
    <property type="entry name" value="Ribosomal_S11"/>
    <property type="match status" value="1"/>
</dbReference>
<dbReference type="PIRSF" id="PIRSF002131">
    <property type="entry name" value="Ribosomal_S11"/>
    <property type="match status" value="1"/>
</dbReference>
<dbReference type="SUPFAM" id="SSF53137">
    <property type="entry name" value="Translational machinery components"/>
    <property type="match status" value="1"/>
</dbReference>
<dbReference type="PROSITE" id="PS00054">
    <property type="entry name" value="RIBOSOMAL_S11"/>
    <property type="match status" value="1"/>
</dbReference>
<comment type="function">
    <text evidence="5 10">Component of the ribosome, a large ribonucleoprotein complex responsible for the synthesis of proteins in the cell. The small ribosomal subunit (SSU) binds messenger RNAs (mRNAs) and translates the encoded message by selecting cognate aminoacyl-transfer RNA (tRNA) molecules. The large subunit (LSU) contains the ribosomal catalytic site termed the peptidyl transferase center (PTC), which catalyzes the formation of peptide bonds, thereby polymerizing the amino acids delivered by tRNAs into a polypeptide chain. The nascent polypeptides leave the ribosome through a tunnel in the LSU and interact with protein factors that function in enzymatic processing, targeting, and the membrane insertion of nascent chains at the exit of the ribosomal tunnel (PubMed:22096102). uS11 is involved in nucleolar processing of pre-18S ribosomal RNA and ribosome assembly (PubMed:15590835).</text>
</comment>
<comment type="subunit">
    <text evidence="5 6 11">Component of the small ribosomal subunit (SSU). Mature yeast ribosomes consist of a small (40S) and a large (60S) subunit. The 40S small subunit contains 1 molecule of ribosomal RNA (18S rRNA) and 33 different proteins (encoded by 57 genes). The large 60S subunit contains 3 rRNA molecules (25S, 5.8S and 5S rRNA) and 46 different proteins (encoded by 81 genes). uS11 interacts with eS1 forming part of the mRNA exit tunnel (PubMed:22096102, PubMed:9559554). uS11 interacts with snoRNA U3. uS11 interacts with MPP10. Component of the ribosomal small subunit (SSU) processome composed of at least 40 protein subunits and snoRNA U3 (PubMed:15590835).</text>
</comment>
<comment type="subcellular location">
    <subcellularLocation>
        <location evidence="6">Cytoplasm</location>
    </subcellularLocation>
    <subcellularLocation>
        <location evidence="5">Nucleus</location>
        <location evidence="5">Nucleolus</location>
    </subcellularLocation>
</comment>
<comment type="PTM">
    <text evidence="2 4">N-terminally acetylated by acetyltransferase NatA.</text>
</comment>
<comment type="miscellaneous">
    <text evidence="3">Present with 29600 molecules/cell in log phase SD medium.</text>
</comment>
<comment type="miscellaneous">
    <text evidence="9">There are 2 genes for uS11 in yeast.</text>
</comment>
<comment type="similarity">
    <text evidence="9">Belongs to the universal ribosomal protein uS11 family.</text>
</comment>
<organism>
    <name type="scientific">Saccharomyces cerevisiae (strain ATCC 204508 / S288c)</name>
    <name type="common">Baker's yeast</name>
    <dbReference type="NCBI Taxonomy" id="559292"/>
    <lineage>
        <taxon>Eukaryota</taxon>
        <taxon>Fungi</taxon>
        <taxon>Dikarya</taxon>
        <taxon>Ascomycota</taxon>
        <taxon>Saccharomycotina</taxon>
        <taxon>Saccharomycetes</taxon>
        <taxon>Saccharomycetales</taxon>
        <taxon>Saccharomycetaceae</taxon>
        <taxon>Saccharomyces</taxon>
    </lineage>
</organism>
<evidence type="ECO:0000256" key="1">
    <source>
        <dbReference type="SAM" id="MobiDB-lite"/>
    </source>
</evidence>
<evidence type="ECO:0000269" key="2">
    <source>
    </source>
</evidence>
<evidence type="ECO:0000269" key="3">
    <source>
    </source>
</evidence>
<evidence type="ECO:0000269" key="4">
    <source>
    </source>
</evidence>
<evidence type="ECO:0000269" key="5">
    <source>
    </source>
</evidence>
<evidence type="ECO:0000269" key="6">
    <source>
    </source>
</evidence>
<evidence type="ECO:0000303" key="7">
    <source>
    </source>
</evidence>
<evidence type="ECO:0000303" key="8">
    <source>
    </source>
</evidence>
<evidence type="ECO:0000305" key="9"/>
<evidence type="ECO:0000305" key="10">
    <source>
    </source>
</evidence>
<evidence type="ECO:0000305" key="11">
    <source>
    </source>
</evidence>
<evidence type="ECO:0007744" key="12">
    <source>
    </source>
</evidence>
<evidence type="ECO:0007829" key="13">
    <source>
        <dbReference type="PDB" id="6RBD"/>
    </source>
</evidence>
<evidence type="ECO:0007829" key="14">
    <source>
        <dbReference type="PDB" id="8C01"/>
    </source>
</evidence>
<gene>
    <name evidence="8" type="primary">RPS14A</name>
    <name type="synonym">CRY1</name>
    <name type="synonym">RPL59</name>
    <name type="ordered locus">YCR031C</name>
    <name type="ORF">YCR31C</name>
</gene>
<sequence length="137" mass="14537">MSNVVQARDNSQVFGVARIYASFNDTFVHVTDLSGKETIARVTGGMKVKADRDESSPYAAMLAAQDVAAKCKEVGITAVHVKIRATGGTRTKTPGPGGQAALRALARSGLRIGRIEDVTPVPSDSTRKKGGRRGRRL</sequence>
<accession>P06367</accession>
<accession>D6VR41</accession>
<accession>Q96VG9</accession>
<feature type="initiator methionine" description="Removed" evidence="2 4 12">
    <location>
        <position position="1"/>
    </location>
</feature>
<feature type="chain" id="PRO_0000123359" description="Small ribosomal subunit protein uS11A">
    <location>
        <begin position="2"/>
        <end position="137"/>
    </location>
</feature>
<feature type="region of interest" description="Disordered" evidence="1">
    <location>
        <begin position="117"/>
        <end position="137"/>
    </location>
</feature>
<feature type="compositionally biased region" description="Basic residues" evidence="1">
    <location>
        <begin position="128"/>
        <end position="137"/>
    </location>
</feature>
<feature type="modified residue" description="N-acetylserine" evidence="2 4 12">
    <location>
        <position position="2"/>
    </location>
</feature>
<feature type="sequence conflict" description="In Ref. 1; AAA34530." evidence="9" ref="1">
    <original>K</original>
    <variation>R</variation>
    <location>
        <position position="72"/>
    </location>
</feature>
<feature type="sequence conflict" description="In Ref. 1; AAA34530." evidence="9" ref="1">
    <original>S</original>
    <variation>C</variation>
    <location>
        <position position="123"/>
    </location>
</feature>
<feature type="strand" evidence="14">
    <location>
        <begin position="14"/>
        <end position="21"/>
    </location>
</feature>
<feature type="strand" evidence="14">
    <location>
        <begin position="26"/>
        <end position="31"/>
    </location>
</feature>
<feature type="strand" evidence="14">
    <location>
        <begin position="35"/>
        <end position="40"/>
    </location>
</feature>
<feature type="helix" evidence="14">
    <location>
        <begin position="44"/>
        <end position="46"/>
    </location>
</feature>
<feature type="helix" evidence="14">
    <location>
        <begin position="51"/>
        <end position="53"/>
    </location>
</feature>
<feature type="helix" evidence="14">
    <location>
        <begin position="57"/>
        <end position="74"/>
    </location>
</feature>
<feature type="strand" evidence="14">
    <location>
        <begin position="78"/>
        <end position="84"/>
    </location>
</feature>
<feature type="helix" evidence="14">
    <location>
        <begin position="96"/>
        <end position="107"/>
    </location>
</feature>
<feature type="strand" evidence="14">
    <location>
        <begin position="111"/>
        <end position="117"/>
    </location>
</feature>
<feature type="turn" evidence="13">
    <location>
        <begin position="129"/>
        <end position="133"/>
    </location>
</feature>